<name>XYL1_ASPCL</name>
<feature type="chain" id="PRO_0000393496" description="Probable NAD(P)H-dependent D-xylose reductase xyl1">
    <location>
        <begin position="1"/>
        <end position="330"/>
    </location>
</feature>
<feature type="active site" description="Proton donor" evidence="1">
    <location>
        <position position="50"/>
    </location>
</feature>
<feature type="binding site" evidence="1">
    <location>
        <position position="112"/>
    </location>
    <ligand>
        <name>substrate</name>
    </ligand>
</feature>
<feature type="binding site" evidence="1">
    <location>
        <begin position="166"/>
        <end position="167"/>
    </location>
    <ligand>
        <name>NAD(+)</name>
        <dbReference type="ChEBI" id="CHEBI:57540"/>
    </ligand>
</feature>
<feature type="binding site" evidence="1">
    <location>
        <begin position="215"/>
        <end position="224"/>
    </location>
    <ligand>
        <name>NAD(+)</name>
        <dbReference type="ChEBI" id="CHEBI:57540"/>
    </ligand>
</feature>
<feature type="binding site" evidence="1">
    <location>
        <begin position="271"/>
        <end position="281"/>
    </location>
    <ligand>
        <name>NAD(+)</name>
        <dbReference type="ChEBI" id="CHEBI:57540"/>
    </ligand>
</feature>
<feature type="site" description="Lowers pKa of active site Tyr" evidence="1">
    <location>
        <position position="79"/>
    </location>
</feature>
<comment type="function">
    <text evidence="1">Catalyzes the initial reaction in the xylose utilization pathway by reducing D-xylose into xylitol. Xylose is a major component of hemicelluloses such as xylan. Most fungi utilize D-xylose via three enzymatic reactions, xylose reductase (XR), xylitol dehydrogenase (XDH), and xylulokinase, to form xylulose 5-phosphate, which enters pentose phosphate pathway (By similarity).</text>
</comment>
<comment type="catalytic activity">
    <reaction>
        <text>xylitol + NAD(+) = D-xylose + NADH + H(+)</text>
        <dbReference type="Rhea" id="RHEA:27441"/>
        <dbReference type="ChEBI" id="CHEBI:15378"/>
        <dbReference type="ChEBI" id="CHEBI:17151"/>
        <dbReference type="ChEBI" id="CHEBI:53455"/>
        <dbReference type="ChEBI" id="CHEBI:57540"/>
        <dbReference type="ChEBI" id="CHEBI:57945"/>
        <dbReference type="EC" id="1.1.1.307"/>
    </reaction>
</comment>
<comment type="catalytic activity">
    <reaction>
        <text>xylitol + NADP(+) = D-xylose + NADPH + H(+)</text>
        <dbReference type="Rhea" id="RHEA:27445"/>
        <dbReference type="ChEBI" id="CHEBI:15378"/>
        <dbReference type="ChEBI" id="CHEBI:17151"/>
        <dbReference type="ChEBI" id="CHEBI:53455"/>
        <dbReference type="ChEBI" id="CHEBI:57783"/>
        <dbReference type="ChEBI" id="CHEBI:58349"/>
        <dbReference type="EC" id="1.1.1.307"/>
    </reaction>
</comment>
<comment type="pathway">
    <text>Carbohydrate metabolism; D-xylose degradation.</text>
</comment>
<comment type="similarity">
    <text evidence="2">Belongs to the aldo/keto reductase family.</text>
</comment>
<organism>
    <name type="scientific">Aspergillus clavatus (strain ATCC 1007 / CBS 513.65 / DSM 816 / NCTC 3887 / NRRL 1 / QM 1276 / 107)</name>
    <dbReference type="NCBI Taxonomy" id="344612"/>
    <lineage>
        <taxon>Eukaryota</taxon>
        <taxon>Fungi</taxon>
        <taxon>Dikarya</taxon>
        <taxon>Ascomycota</taxon>
        <taxon>Pezizomycotina</taxon>
        <taxon>Eurotiomycetes</taxon>
        <taxon>Eurotiomycetidae</taxon>
        <taxon>Eurotiales</taxon>
        <taxon>Aspergillaceae</taxon>
        <taxon>Aspergillus</taxon>
        <taxon>Aspergillus subgen. Fumigati</taxon>
    </lineage>
</organism>
<accession>A1CRI1</accession>
<dbReference type="EC" id="1.1.1.307"/>
<dbReference type="EMBL" id="DS027059">
    <property type="protein sequence ID" value="EAW08252.1"/>
    <property type="molecule type" value="Genomic_DNA"/>
</dbReference>
<dbReference type="RefSeq" id="XP_001269678.1">
    <property type="nucleotide sequence ID" value="XM_001269677.1"/>
</dbReference>
<dbReference type="SMR" id="A1CRI1"/>
<dbReference type="STRING" id="344612.A1CRI1"/>
<dbReference type="EnsemblFungi" id="EAW08252">
    <property type="protein sequence ID" value="EAW08252"/>
    <property type="gene ID" value="ACLA_029850"/>
</dbReference>
<dbReference type="GeneID" id="4701691"/>
<dbReference type="KEGG" id="act:ACLA_029850"/>
<dbReference type="VEuPathDB" id="FungiDB:ACLA_029850"/>
<dbReference type="eggNOG" id="KOG1577">
    <property type="taxonomic scope" value="Eukaryota"/>
</dbReference>
<dbReference type="HOGENOM" id="CLU_023205_0_0_1"/>
<dbReference type="OMA" id="VHWPSEG"/>
<dbReference type="OrthoDB" id="416253at2759"/>
<dbReference type="UniPathway" id="UPA00810"/>
<dbReference type="Proteomes" id="UP000006701">
    <property type="component" value="Unassembled WGS sequence"/>
</dbReference>
<dbReference type="GO" id="GO:0032866">
    <property type="term" value="F:D-xylose reductase (NADPH) activity"/>
    <property type="evidence" value="ECO:0007669"/>
    <property type="project" value="InterPro"/>
</dbReference>
<dbReference type="GO" id="GO:0042843">
    <property type="term" value="P:D-xylose catabolic process"/>
    <property type="evidence" value="ECO:0007669"/>
    <property type="project" value="UniProtKB-UniPathway"/>
</dbReference>
<dbReference type="CDD" id="cd19115">
    <property type="entry name" value="AKR_AKR2D1"/>
    <property type="match status" value="1"/>
</dbReference>
<dbReference type="FunFam" id="3.20.20.100:FF:000007">
    <property type="entry name" value="NAD(P)H-dependent D-xylose reductase xyl1"/>
    <property type="match status" value="1"/>
</dbReference>
<dbReference type="Gene3D" id="3.20.20.100">
    <property type="entry name" value="NADP-dependent oxidoreductase domain"/>
    <property type="match status" value="1"/>
</dbReference>
<dbReference type="InterPro" id="IPR020471">
    <property type="entry name" value="AKR"/>
</dbReference>
<dbReference type="InterPro" id="IPR044487">
    <property type="entry name" value="AKR2D"/>
</dbReference>
<dbReference type="InterPro" id="IPR018170">
    <property type="entry name" value="Aldo/ket_reductase_CS"/>
</dbReference>
<dbReference type="InterPro" id="IPR023210">
    <property type="entry name" value="NADP_OxRdtase_dom"/>
</dbReference>
<dbReference type="InterPro" id="IPR036812">
    <property type="entry name" value="NADP_OxRdtase_dom_sf"/>
</dbReference>
<dbReference type="PANTHER" id="PTHR11732">
    <property type="entry name" value="ALDO/KETO REDUCTASE"/>
    <property type="match status" value="1"/>
</dbReference>
<dbReference type="Pfam" id="PF00248">
    <property type="entry name" value="Aldo_ket_red"/>
    <property type="match status" value="1"/>
</dbReference>
<dbReference type="PIRSF" id="PIRSF000097">
    <property type="entry name" value="AKR"/>
    <property type="match status" value="1"/>
</dbReference>
<dbReference type="PRINTS" id="PR00069">
    <property type="entry name" value="ALDKETRDTASE"/>
</dbReference>
<dbReference type="SUPFAM" id="SSF51430">
    <property type="entry name" value="NAD(P)-linked oxidoreductase"/>
    <property type="match status" value="1"/>
</dbReference>
<dbReference type="PROSITE" id="PS00798">
    <property type="entry name" value="ALDOKETO_REDUCTASE_1"/>
    <property type="match status" value="1"/>
</dbReference>
<dbReference type="PROSITE" id="PS00062">
    <property type="entry name" value="ALDOKETO_REDUCTASE_2"/>
    <property type="match status" value="1"/>
</dbReference>
<dbReference type="PROSITE" id="PS00063">
    <property type="entry name" value="ALDOKETO_REDUCTASE_3"/>
    <property type="match status" value="1"/>
</dbReference>
<gene>
    <name type="primary">xyl1</name>
    <name type="ORF">ACLA_029850</name>
</gene>
<sequence length="330" mass="37284">MSTPTVKLNSGYEMPLVGFGLWKVNNDTCADQVYEAIKAGYRLFDGACDYGNEVECGQGVARAIKEGIVKREDLFIVSKLWNSFHDSERVEPICRKQLADWGVDYFDLYIVHFPIALKYVDPAVRYPPGWMSENDKLEFSNTPIHETWAAMEKLVDLKLARSIGVSNFSAQLLMDLLRYARVRPSTLQIEHHPYLTQKRLVDYAQKEGLAVTAYSSFGPLSFLELNLKDAHETPLLFEHPAITAIAEKHGKTPAQVLLRWATQRKVAVIPKSNNPTRLAQNLDVTSFNLEASEIESISALDRNLRFNDPLAITNFVSSLCAQYGFYAPIF</sequence>
<proteinExistence type="inferred from homology"/>
<evidence type="ECO:0000250" key="1"/>
<evidence type="ECO:0000305" key="2"/>
<keyword id="KW-0119">Carbohydrate metabolism</keyword>
<keyword id="KW-0520">NAD</keyword>
<keyword id="KW-0521">NADP</keyword>
<keyword id="KW-0560">Oxidoreductase</keyword>
<keyword id="KW-1185">Reference proteome</keyword>
<keyword id="KW-0859">Xylose metabolism</keyword>
<reference key="1">
    <citation type="journal article" date="2008" name="PLoS Genet.">
        <title>Genomic islands in the pathogenic filamentous fungus Aspergillus fumigatus.</title>
        <authorList>
            <person name="Fedorova N.D."/>
            <person name="Khaldi N."/>
            <person name="Joardar V.S."/>
            <person name="Maiti R."/>
            <person name="Amedeo P."/>
            <person name="Anderson M.J."/>
            <person name="Crabtree J."/>
            <person name="Silva J.C."/>
            <person name="Badger J.H."/>
            <person name="Albarraq A."/>
            <person name="Angiuoli S."/>
            <person name="Bussey H."/>
            <person name="Bowyer P."/>
            <person name="Cotty P.J."/>
            <person name="Dyer P.S."/>
            <person name="Egan A."/>
            <person name="Galens K."/>
            <person name="Fraser-Liggett C.M."/>
            <person name="Haas B.J."/>
            <person name="Inman J.M."/>
            <person name="Kent R."/>
            <person name="Lemieux S."/>
            <person name="Malavazi I."/>
            <person name="Orvis J."/>
            <person name="Roemer T."/>
            <person name="Ronning C.M."/>
            <person name="Sundaram J.P."/>
            <person name="Sutton G."/>
            <person name="Turner G."/>
            <person name="Venter J.C."/>
            <person name="White O.R."/>
            <person name="Whitty B.R."/>
            <person name="Youngman P."/>
            <person name="Wolfe K.H."/>
            <person name="Goldman G.H."/>
            <person name="Wortman J.R."/>
            <person name="Jiang B."/>
            <person name="Denning D.W."/>
            <person name="Nierman W.C."/>
        </authorList>
    </citation>
    <scope>NUCLEOTIDE SEQUENCE [LARGE SCALE GENOMIC DNA]</scope>
    <source>
        <strain>ATCC 1007 / CBS 513.65 / DSM 816 / NCTC 3887 / NRRL 1 / QM 1276 / 107</strain>
    </source>
</reference>
<protein>
    <recommendedName>
        <fullName>Probable NAD(P)H-dependent D-xylose reductase xyl1</fullName>
        <shortName>XR</shortName>
        <ecNumber>1.1.1.307</ecNumber>
    </recommendedName>
</protein>